<proteinExistence type="inferred from homology"/>
<evidence type="ECO:0000255" key="1">
    <source>
        <dbReference type="HAMAP-Rule" id="MF_01331"/>
    </source>
</evidence>
<evidence type="ECO:0000305" key="2"/>
<protein>
    <recommendedName>
        <fullName evidence="1">Large ribosomal subunit protein uL22</fullName>
    </recommendedName>
    <alternativeName>
        <fullName evidence="2">50S ribosomal protein L22</fullName>
    </alternativeName>
</protein>
<organism>
    <name type="scientific">Prochlorococcus marinus (strain MIT 9312)</name>
    <dbReference type="NCBI Taxonomy" id="74546"/>
    <lineage>
        <taxon>Bacteria</taxon>
        <taxon>Bacillati</taxon>
        <taxon>Cyanobacteriota</taxon>
        <taxon>Cyanophyceae</taxon>
        <taxon>Synechococcales</taxon>
        <taxon>Prochlorococcaceae</taxon>
        <taxon>Prochlorococcus</taxon>
    </lineage>
</organism>
<reference key="1">
    <citation type="journal article" date="2006" name="Science">
        <title>Genomic islands and the ecology and evolution of Prochlorococcus.</title>
        <authorList>
            <person name="Coleman M.L."/>
            <person name="Sullivan M.B."/>
            <person name="Martiny A.C."/>
            <person name="Steglich C."/>
            <person name="Barry K."/>
            <person name="Delong E.F."/>
            <person name="Chisholm S.W."/>
        </authorList>
    </citation>
    <scope>NUCLEOTIDE SEQUENCE [LARGE SCALE GENOMIC DNA]</scope>
    <source>
        <strain>MIT 9312</strain>
    </source>
</reference>
<dbReference type="EMBL" id="CP000111">
    <property type="protein sequence ID" value="ABB50706.1"/>
    <property type="molecule type" value="Genomic_DNA"/>
</dbReference>
<dbReference type="RefSeq" id="WP_011377187.1">
    <property type="nucleotide sequence ID" value="NC_007577.1"/>
</dbReference>
<dbReference type="SMR" id="Q318I9"/>
<dbReference type="STRING" id="74546.PMT9312_1645"/>
<dbReference type="KEGG" id="pmi:PMT9312_1645"/>
<dbReference type="eggNOG" id="COG0091">
    <property type="taxonomic scope" value="Bacteria"/>
</dbReference>
<dbReference type="HOGENOM" id="CLU_083987_3_2_3"/>
<dbReference type="OrthoDB" id="9805969at2"/>
<dbReference type="Proteomes" id="UP000002715">
    <property type="component" value="Chromosome"/>
</dbReference>
<dbReference type="GO" id="GO:0022625">
    <property type="term" value="C:cytosolic large ribosomal subunit"/>
    <property type="evidence" value="ECO:0007669"/>
    <property type="project" value="TreeGrafter"/>
</dbReference>
<dbReference type="GO" id="GO:0019843">
    <property type="term" value="F:rRNA binding"/>
    <property type="evidence" value="ECO:0007669"/>
    <property type="project" value="UniProtKB-UniRule"/>
</dbReference>
<dbReference type="GO" id="GO:0003735">
    <property type="term" value="F:structural constituent of ribosome"/>
    <property type="evidence" value="ECO:0007669"/>
    <property type="project" value="InterPro"/>
</dbReference>
<dbReference type="GO" id="GO:0006412">
    <property type="term" value="P:translation"/>
    <property type="evidence" value="ECO:0007669"/>
    <property type="project" value="UniProtKB-UniRule"/>
</dbReference>
<dbReference type="CDD" id="cd00336">
    <property type="entry name" value="Ribosomal_L22"/>
    <property type="match status" value="1"/>
</dbReference>
<dbReference type="Gene3D" id="3.90.470.10">
    <property type="entry name" value="Ribosomal protein L22/L17"/>
    <property type="match status" value="1"/>
</dbReference>
<dbReference type="HAMAP" id="MF_01331_B">
    <property type="entry name" value="Ribosomal_uL22_B"/>
    <property type="match status" value="1"/>
</dbReference>
<dbReference type="InterPro" id="IPR001063">
    <property type="entry name" value="Ribosomal_uL22"/>
</dbReference>
<dbReference type="InterPro" id="IPR005727">
    <property type="entry name" value="Ribosomal_uL22_bac/chlpt-type"/>
</dbReference>
<dbReference type="InterPro" id="IPR047867">
    <property type="entry name" value="Ribosomal_uL22_bac/org-type"/>
</dbReference>
<dbReference type="InterPro" id="IPR018260">
    <property type="entry name" value="Ribosomal_uL22_CS"/>
</dbReference>
<dbReference type="InterPro" id="IPR036394">
    <property type="entry name" value="Ribosomal_uL22_sf"/>
</dbReference>
<dbReference type="NCBIfam" id="TIGR01044">
    <property type="entry name" value="rplV_bact"/>
    <property type="match status" value="1"/>
</dbReference>
<dbReference type="PANTHER" id="PTHR13501">
    <property type="entry name" value="CHLOROPLAST 50S RIBOSOMAL PROTEIN L22-RELATED"/>
    <property type="match status" value="1"/>
</dbReference>
<dbReference type="PANTHER" id="PTHR13501:SF8">
    <property type="entry name" value="LARGE RIBOSOMAL SUBUNIT PROTEIN UL22M"/>
    <property type="match status" value="1"/>
</dbReference>
<dbReference type="Pfam" id="PF00237">
    <property type="entry name" value="Ribosomal_L22"/>
    <property type="match status" value="1"/>
</dbReference>
<dbReference type="SUPFAM" id="SSF54843">
    <property type="entry name" value="Ribosomal protein L22"/>
    <property type="match status" value="1"/>
</dbReference>
<dbReference type="PROSITE" id="PS00464">
    <property type="entry name" value="RIBOSOMAL_L22"/>
    <property type="match status" value="1"/>
</dbReference>
<keyword id="KW-0687">Ribonucleoprotein</keyword>
<keyword id="KW-0689">Ribosomal protein</keyword>
<keyword id="KW-0694">RNA-binding</keyword>
<keyword id="KW-0699">rRNA-binding</keyword>
<sequence>MTNTSETTKTAIAHGNYVRGSASKVRRVLDQIRGRSYRDALIMLEFMPYRSTDPITKVLRSAVANAEHNYGMDPSTLIISSAWANNGPVMKRYRPRAQGRAFSIKKQTCHISISVESAPTQINAEVQN</sequence>
<comment type="function">
    <text evidence="1">This protein binds specifically to 23S rRNA; its binding is stimulated by other ribosomal proteins, e.g. L4, L17, and L20. It is important during the early stages of 50S assembly. It makes multiple contacts with different domains of the 23S rRNA in the assembled 50S subunit and ribosome (By similarity).</text>
</comment>
<comment type="function">
    <text evidence="1">The globular domain of the protein is located near the polypeptide exit tunnel on the outside of the subunit, while an extended beta-hairpin is found that lines the wall of the exit tunnel in the center of the 70S ribosome.</text>
</comment>
<comment type="subunit">
    <text evidence="1">Part of the 50S ribosomal subunit.</text>
</comment>
<comment type="similarity">
    <text evidence="1">Belongs to the universal ribosomal protein uL22 family.</text>
</comment>
<feature type="chain" id="PRO_0000243181" description="Large ribosomal subunit protein uL22">
    <location>
        <begin position="1"/>
        <end position="128"/>
    </location>
</feature>
<accession>Q318I9</accession>
<gene>
    <name evidence="1" type="primary">rplV</name>
    <name evidence="1" type="synonym">rpl22</name>
    <name type="ordered locus">PMT9312_1645</name>
</gene>
<name>RL22_PROM9</name>